<keyword id="KW-0963">Cytoplasm</keyword>
<keyword id="KW-0342">GTP-binding</keyword>
<keyword id="KW-0436">Ligase</keyword>
<keyword id="KW-0460">Magnesium</keyword>
<keyword id="KW-0479">Metal-binding</keyword>
<keyword id="KW-0547">Nucleotide-binding</keyword>
<keyword id="KW-0658">Purine biosynthesis</keyword>
<evidence type="ECO:0000255" key="1">
    <source>
        <dbReference type="HAMAP-Rule" id="MF_00011"/>
    </source>
</evidence>
<name>PURA_BUCAP</name>
<sequence>MNTNIVILGTQWGDEGKGKIVDFLSSNSSYVVRYHGGHNAGHTLVVNGKKIILHLIPSGLLYPNVIGIISNGVVISPFELVKEIRMLEKNNHFINERLFISESAPLILPYHIAIDLAREKQLGINAIGTTGRGIGPAYEDKVARRALRVGDLKNTQKLSTKLKVIVDYYNHQLVSFYKQNPISYKEILKDLLKVKDLIYNMIKDTSAILHKAIEDKKRIIFEGAQGTLLDIDHGTYPYVTSSNSTTGGIITGTGVGPKNLGYILGITKAYTTRVGKGPFPTELFDDIDSYLSKKGQEFGSTTGRKRRTGWLDGVALRYSVKINSLSALCITKLDVLDDLKEIKICTSYKDVNTKKIYKDFPIFNLEDVTPVYEVHPGWMKKTSGIKKIEDLPKAACNYINRIEEIAQVPIDIISTGPDRSDTILLKSLFF</sequence>
<comment type="function">
    <text evidence="1">Plays an important role in the de novo pathway of purine nucleotide biosynthesis. Catalyzes the first committed step in the biosynthesis of AMP from IMP.</text>
</comment>
<comment type="catalytic activity">
    <reaction evidence="1">
        <text>IMP + L-aspartate + GTP = N(6)-(1,2-dicarboxyethyl)-AMP + GDP + phosphate + 2 H(+)</text>
        <dbReference type="Rhea" id="RHEA:15753"/>
        <dbReference type="ChEBI" id="CHEBI:15378"/>
        <dbReference type="ChEBI" id="CHEBI:29991"/>
        <dbReference type="ChEBI" id="CHEBI:37565"/>
        <dbReference type="ChEBI" id="CHEBI:43474"/>
        <dbReference type="ChEBI" id="CHEBI:57567"/>
        <dbReference type="ChEBI" id="CHEBI:58053"/>
        <dbReference type="ChEBI" id="CHEBI:58189"/>
        <dbReference type="EC" id="6.3.4.4"/>
    </reaction>
</comment>
<comment type="cofactor">
    <cofactor evidence="1">
        <name>Mg(2+)</name>
        <dbReference type="ChEBI" id="CHEBI:18420"/>
    </cofactor>
    <text evidence="1">Binds 1 Mg(2+) ion per subunit.</text>
</comment>
<comment type="pathway">
    <text evidence="1">Purine metabolism; AMP biosynthesis via de novo pathway; AMP from IMP: step 1/2.</text>
</comment>
<comment type="subunit">
    <text evidence="1">Homodimer.</text>
</comment>
<comment type="subcellular location">
    <subcellularLocation>
        <location evidence="1">Cytoplasm</location>
    </subcellularLocation>
</comment>
<comment type="similarity">
    <text evidence="1">Belongs to the adenylosuccinate synthetase family.</text>
</comment>
<reference key="1">
    <citation type="journal article" date="2002" name="Science">
        <title>50 million years of genomic stasis in endosymbiotic bacteria.</title>
        <authorList>
            <person name="Tamas I."/>
            <person name="Klasson L."/>
            <person name="Canbaeck B."/>
            <person name="Naeslund A.K."/>
            <person name="Eriksson A.-S."/>
            <person name="Wernegreen J.J."/>
            <person name="Sandstroem J.P."/>
            <person name="Moran N.A."/>
            <person name="Andersson S.G.E."/>
        </authorList>
    </citation>
    <scope>NUCLEOTIDE SEQUENCE [LARGE SCALE GENOMIC DNA]</scope>
    <source>
        <strain>Sg</strain>
    </source>
</reference>
<proteinExistence type="inferred from homology"/>
<dbReference type="EC" id="6.3.4.4" evidence="1"/>
<dbReference type="EMBL" id="AE013218">
    <property type="protein sequence ID" value="AAM68085.1"/>
    <property type="molecule type" value="Genomic_DNA"/>
</dbReference>
<dbReference type="RefSeq" id="WP_011054051.1">
    <property type="nucleotide sequence ID" value="NC_004061.1"/>
</dbReference>
<dbReference type="SMR" id="Q8K916"/>
<dbReference type="STRING" id="198804.BUsg_546"/>
<dbReference type="GeneID" id="93004023"/>
<dbReference type="KEGG" id="bas:BUsg_546"/>
<dbReference type="eggNOG" id="COG0104">
    <property type="taxonomic scope" value="Bacteria"/>
</dbReference>
<dbReference type="HOGENOM" id="CLU_029848_0_0_6"/>
<dbReference type="UniPathway" id="UPA00075">
    <property type="reaction ID" value="UER00335"/>
</dbReference>
<dbReference type="Proteomes" id="UP000000416">
    <property type="component" value="Chromosome"/>
</dbReference>
<dbReference type="GO" id="GO:0005737">
    <property type="term" value="C:cytoplasm"/>
    <property type="evidence" value="ECO:0007669"/>
    <property type="project" value="UniProtKB-SubCell"/>
</dbReference>
<dbReference type="GO" id="GO:0004019">
    <property type="term" value="F:adenylosuccinate synthase activity"/>
    <property type="evidence" value="ECO:0007669"/>
    <property type="project" value="UniProtKB-UniRule"/>
</dbReference>
<dbReference type="GO" id="GO:0005525">
    <property type="term" value="F:GTP binding"/>
    <property type="evidence" value="ECO:0007669"/>
    <property type="project" value="UniProtKB-UniRule"/>
</dbReference>
<dbReference type="GO" id="GO:0000287">
    <property type="term" value="F:magnesium ion binding"/>
    <property type="evidence" value="ECO:0007669"/>
    <property type="project" value="UniProtKB-UniRule"/>
</dbReference>
<dbReference type="GO" id="GO:0044208">
    <property type="term" value="P:'de novo' AMP biosynthetic process"/>
    <property type="evidence" value="ECO:0007669"/>
    <property type="project" value="UniProtKB-UniRule"/>
</dbReference>
<dbReference type="GO" id="GO:0046040">
    <property type="term" value="P:IMP metabolic process"/>
    <property type="evidence" value="ECO:0007669"/>
    <property type="project" value="TreeGrafter"/>
</dbReference>
<dbReference type="CDD" id="cd03108">
    <property type="entry name" value="AdSS"/>
    <property type="match status" value="1"/>
</dbReference>
<dbReference type="FunFam" id="1.10.300.10:FF:000001">
    <property type="entry name" value="Adenylosuccinate synthetase"/>
    <property type="match status" value="1"/>
</dbReference>
<dbReference type="FunFam" id="3.90.170.10:FF:000001">
    <property type="entry name" value="Adenylosuccinate synthetase"/>
    <property type="match status" value="1"/>
</dbReference>
<dbReference type="Gene3D" id="3.40.440.10">
    <property type="entry name" value="Adenylosuccinate Synthetase, subunit A, domain 1"/>
    <property type="match status" value="1"/>
</dbReference>
<dbReference type="Gene3D" id="1.10.300.10">
    <property type="entry name" value="Adenylosuccinate Synthetase, subunit A, domain 2"/>
    <property type="match status" value="1"/>
</dbReference>
<dbReference type="Gene3D" id="3.90.170.10">
    <property type="entry name" value="Adenylosuccinate Synthetase, subunit A, domain 3"/>
    <property type="match status" value="1"/>
</dbReference>
<dbReference type="HAMAP" id="MF_00011">
    <property type="entry name" value="Adenylosucc_synth"/>
    <property type="match status" value="1"/>
</dbReference>
<dbReference type="InterPro" id="IPR018220">
    <property type="entry name" value="Adenylosuccin_syn_GTP-bd"/>
</dbReference>
<dbReference type="InterPro" id="IPR033128">
    <property type="entry name" value="Adenylosuccin_syn_Lys_AS"/>
</dbReference>
<dbReference type="InterPro" id="IPR042109">
    <property type="entry name" value="Adenylosuccinate_synth_dom1"/>
</dbReference>
<dbReference type="InterPro" id="IPR042110">
    <property type="entry name" value="Adenylosuccinate_synth_dom2"/>
</dbReference>
<dbReference type="InterPro" id="IPR042111">
    <property type="entry name" value="Adenylosuccinate_synth_dom3"/>
</dbReference>
<dbReference type="InterPro" id="IPR001114">
    <property type="entry name" value="Adenylosuccinate_synthetase"/>
</dbReference>
<dbReference type="InterPro" id="IPR027417">
    <property type="entry name" value="P-loop_NTPase"/>
</dbReference>
<dbReference type="NCBIfam" id="NF002223">
    <property type="entry name" value="PRK01117.1"/>
    <property type="match status" value="1"/>
</dbReference>
<dbReference type="NCBIfam" id="TIGR00184">
    <property type="entry name" value="purA"/>
    <property type="match status" value="1"/>
</dbReference>
<dbReference type="PANTHER" id="PTHR11846">
    <property type="entry name" value="ADENYLOSUCCINATE SYNTHETASE"/>
    <property type="match status" value="1"/>
</dbReference>
<dbReference type="PANTHER" id="PTHR11846:SF0">
    <property type="entry name" value="ADENYLOSUCCINATE SYNTHETASE"/>
    <property type="match status" value="1"/>
</dbReference>
<dbReference type="Pfam" id="PF00709">
    <property type="entry name" value="Adenylsucc_synt"/>
    <property type="match status" value="1"/>
</dbReference>
<dbReference type="SMART" id="SM00788">
    <property type="entry name" value="Adenylsucc_synt"/>
    <property type="match status" value="1"/>
</dbReference>
<dbReference type="SUPFAM" id="SSF52540">
    <property type="entry name" value="P-loop containing nucleoside triphosphate hydrolases"/>
    <property type="match status" value="1"/>
</dbReference>
<dbReference type="PROSITE" id="PS01266">
    <property type="entry name" value="ADENYLOSUCCIN_SYN_1"/>
    <property type="match status" value="1"/>
</dbReference>
<dbReference type="PROSITE" id="PS00513">
    <property type="entry name" value="ADENYLOSUCCIN_SYN_2"/>
    <property type="match status" value="1"/>
</dbReference>
<gene>
    <name evidence="1" type="primary">purA</name>
    <name type="ordered locus">BUsg_546</name>
</gene>
<feature type="chain" id="PRO_0000095158" description="Adenylosuccinate synthetase">
    <location>
        <begin position="1"/>
        <end position="430"/>
    </location>
</feature>
<feature type="active site" description="Proton acceptor" evidence="1">
    <location>
        <position position="14"/>
    </location>
</feature>
<feature type="active site" description="Proton donor" evidence="1">
    <location>
        <position position="42"/>
    </location>
</feature>
<feature type="binding site" evidence="1">
    <location>
        <begin position="13"/>
        <end position="19"/>
    </location>
    <ligand>
        <name>GTP</name>
        <dbReference type="ChEBI" id="CHEBI:37565"/>
    </ligand>
</feature>
<feature type="binding site" description="in other chain" evidence="1">
    <location>
        <begin position="14"/>
        <end position="17"/>
    </location>
    <ligand>
        <name>IMP</name>
        <dbReference type="ChEBI" id="CHEBI:58053"/>
        <note>ligand shared between dimeric partners</note>
    </ligand>
</feature>
<feature type="binding site" evidence="1">
    <location>
        <position position="14"/>
    </location>
    <ligand>
        <name>Mg(2+)</name>
        <dbReference type="ChEBI" id="CHEBI:18420"/>
    </ligand>
</feature>
<feature type="binding site" description="in other chain" evidence="1">
    <location>
        <begin position="39"/>
        <end position="42"/>
    </location>
    <ligand>
        <name>IMP</name>
        <dbReference type="ChEBI" id="CHEBI:58053"/>
        <note>ligand shared between dimeric partners</note>
    </ligand>
</feature>
<feature type="binding site" evidence="1">
    <location>
        <begin position="41"/>
        <end position="43"/>
    </location>
    <ligand>
        <name>GTP</name>
        <dbReference type="ChEBI" id="CHEBI:37565"/>
    </ligand>
</feature>
<feature type="binding site" evidence="1">
    <location>
        <position position="41"/>
    </location>
    <ligand>
        <name>Mg(2+)</name>
        <dbReference type="ChEBI" id="CHEBI:18420"/>
    </ligand>
</feature>
<feature type="binding site" description="in other chain" evidence="1">
    <location>
        <position position="130"/>
    </location>
    <ligand>
        <name>IMP</name>
        <dbReference type="ChEBI" id="CHEBI:58053"/>
        <note>ligand shared between dimeric partners</note>
    </ligand>
</feature>
<feature type="binding site" evidence="1">
    <location>
        <position position="144"/>
    </location>
    <ligand>
        <name>IMP</name>
        <dbReference type="ChEBI" id="CHEBI:58053"/>
        <note>ligand shared between dimeric partners</note>
    </ligand>
</feature>
<feature type="binding site" description="in other chain" evidence="1">
    <location>
        <position position="225"/>
    </location>
    <ligand>
        <name>IMP</name>
        <dbReference type="ChEBI" id="CHEBI:58053"/>
        <note>ligand shared between dimeric partners</note>
    </ligand>
</feature>
<feature type="binding site" description="in other chain" evidence="1">
    <location>
        <position position="240"/>
    </location>
    <ligand>
        <name>IMP</name>
        <dbReference type="ChEBI" id="CHEBI:58053"/>
        <note>ligand shared between dimeric partners</note>
    </ligand>
</feature>
<feature type="binding site" evidence="1">
    <location>
        <begin position="300"/>
        <end position="306"/>
    </location>
    <ligand>
        <name>substrate</name>
    </ligand>
</feature>
<feature type="binding site" description="in other chain" evidence="1">
    <location>
        <position position="304"/>
    </location>
    <ligand>
        <name>IMP</name>
        <dbReference type="ChEBI" id="CHEBI:58053"/>
        <note>ligand shared between dimeric partners</note>
    </ligand>
</feature>
<feature type="binding site" evidence="1">
    <location>
        <position position="306"/>
    </location>
    <ligand>
        <name>GTP</name>
        <dbReference type="ChEBI" id="CHEBI:37565"/>
    </ligand>
</feature>
<feature type="binding site" evidence="1">
    <location>
        <begin position="332"/>
        <end position="334"/>
    </location>
    <ligand>
        <name>GTP</name>
        <dbReference type="ChEBI" id="CHEBI:37565"/>
    </ligand>
</feature>
<feature type="binding site" evidence="1">
    <location>
        <begin position="414"/>
        <end position="416"/>
    </location>
    <ligand>
        <name>GTP</name>
        <dbReference type="ChEBI" id="CHEBI:37565"/>
    </ligand>
</feature>
<protein>
    <recommendedName>
        <fullName evidence="1">Adenylosuccinate synthetase</fullName>
        <shortName evidence="1">AMPSase</shortName>
        <shortName evidence="1">AdSS</shortName>
        <ecNumber evidence="1">6.3.4.4</ecNumber>
    </recommendedName>
    <alternativeName>
        <fullName evidence="1">IMP--aspartate ligase</fullName>
    </alternativeName>
</protein>
<accession>Q8K916</accession>
<organism>
    <name type="scientific">Buchnera aphidicola subsp. Schizaphis graminum (strain Sg)</name>
    <dbReference type="NCBI Taxonomy" id="198804"/>
    <lineage>
        <taxon>Bacteria</taxon>
        <taxon>Pseudomonadati</taxon>
        <taxon>Pseudomonadota</taxon>
        <taxon>Gammaproteobacteria</taxon>
        <taxon>Enterobacterales</taxon>
        <taxon>Erwiniaceae</taxon>
        <taxon>Buchnera</taxon>
    </lineage>
</organism>